<evidence type="ECO:0000255" key="1">
    <source>
        <dbReference type="HAMAP-Rule" id="MF_00736"/>
    </source>
</evidence>
<evidence type="ECO:0000305" key="2"/>
<protein>
    <recommendedName>
        <fullName evidence="1">Large ribosomal subunit protein uL11</fullName>
    </recommendedName>
    <alternativeName>
        <fullName evidence="2">50S ribosomal protein L11</fullName>
    </alternativeName>
</protein>
<accession>B5ELW8</accession>
<proteinExistence type="inferred from homology"/>
<organism>
    <name type="scientific">Acidithiobacillus ferrooxidans (strain ATCC 53993 / BNL-5-31)</name>
    <name type="common">Leptospirillum ferrooxidans (ATCC 53993)</name>
    <dbReference type="NCBI Taxonomy" id="380394"/>
    <lineage>
        <taxon>Bacteria</taxon>
        <taxon>Pseudomonadati</taxon>
        <taxon>Pseudomonadota</taxon>
        <taxon>Acidithiobacillia</taxon>
        <taxon>Acidithiobacillales</taxon>
        <taxon>Acidithiobacillaceae</taxon>
        <taxon>Acidithiobacillus</taxon>
    </lineage>
</organism>
<keyword id="KW-0488">Methylation</keyword>
<keyword id="KW-0687">Ribonucleoprotein</keyword>
<keyword id="KW-0689">Ribosomal protein</keyword>
<keyword id="KW-0694">RNA-binding</keyword>
<keyword id="KW-0699">rRNA-binding</keyword>
<dbReference type="EMBL" id="CP001132">
    <property type="protein sequence ID" value="ACH82740.1"/>
    <property type="molecule type" value="Genomic_DNA"/>
</dbReference>
<dbReference type="RefSeq" id="WP_012536080.1">
    <property type="nucleotide sequence ID" value="NC_011206.1"/>
</dbReference>
<dbReference type="SMR" id="B5ELW8"/>
<dbReference type="GeneID" id="65279695"/>
<dbReference type="KEGG" id="afe:Lferr_0486"/>
<dbReference type="eggNOG" id="COG0080">
    <property type="taxonomic scope" value="Bacteria"/>
</dbReference>
<dbReference type="HOGENOM" id="CLU_074237_2_0_6"/>
<dbReference type="GO" id="GO:0022625">
    <property type="term" value="C:cytosolic large ribosomal subunit"/>
    <property type="evidence" value="ECO:0007669"/>
    <property type="project" value="TreeGrafter"/>
</dbReference>
<dbReference type="GO" id="GO:0070180">
    <property type="term" value="F:large ribosomal subunit rRNA binding"/>
    <property type="evidence" value="ECO:0007669"/>
    <property type="project" value="UniProtKB-UniRule"/>
</dbReference>
<dbReference type="GO" id="GO:0003735">
    <property type="term" value="F:structural constituent of ribosome"/>
    <property type="evidence" value="ECO:0007669"/>
    <property type="project" value="InterPro"/>
</dbReference>
<dbReference type="GO" id="GO:0006412">
    <property type="term" value="P:translation"/>
    <property type="evidence" value="ECO:0007669"/>
    <property type="project" value="UniProtKB-UniRule"/>
</dbReference>
<dbReference type="CDD" id="cd00349">
    <property type="entry name" value="Ribosomal_L11"/>
    <property type="match status" value="1"/>
</dbReference>
<dbReference type="FunFam" id="1.10.10.250:FF:000001">
    <property type="entry name" value="50S ribosomal protein L11"/>
    <property type="match status" value="1"/>
</dbReference>
<dbReference type="FunFam" id="3.30.1550.10:FF:000001">
    <property type="entry name" value="50S ribosomal protein L11"/>
    <property type="match status" value="1"/>
</dbReference>
<dbReference type="Gene3D" id="1.10.10.250">
    <property type="entry name" value="Ribosomal protein L11, C-terminal domain"/>
    <property type="match status" value="1"/>
</dbReference>
<dbReference type="Gene3D" id="3.30.1550.10">
    <property type="entry name" value="Ribosomal protein L11/L12, N-terminal domain"/>
    <property type="match status" value="1"/>
</dbReference>
<dbReference type="HAMAP" id="MF_00736">
    <property type="entry name" value="Ribosomal_uL11"/>
    <property type="match status" value="1"/>
</dbReference>
<dbReference type="InterPro" id="IPR000911">
    <property type="entry name" value="Ribosomal_uL11"/>
</dbReference>
<dbReference type="InterPro" id="IPR006519">
    <property type="entry name" value="Ribosomal_uL11_bac-typ"/>
</dbReference>
<dbReference type="InterPro" id="IPR020783">
    <property type="entry name" value="Ribosomal_uL11_C"/>
</dbReference>
<dbReference type="InterPro" id="IPR036769">
    <property type="entry name" value="Ribosomal_uL11_C_sf"/>
</dbReference>
<dbReference type="InterPro" id="IPR020785">
    <property type="entry name" value="Ribosomal_uL11_CS"/>
</dbReference>
<dbReference type="InterPro" id="IPR020784">
    <property type="entry name" value="Ribosomal_uL11_N"/>
</dbReference>
<dbReference type="InterPro" id="IPR036796">
    <property type="entry name" value="Ribosomal_uL11_N_sf"/>
</dbReference>
<dbReference type="NCBIfam" id="TIGR01632">
    <property type="entry name" value="L11_bact"/>
    <property type="match status" value="1"/>
</dbReference>
<dbReference type="PANTHER" id="PTHR11661">
    <property type="entry name" value="60S RIBOSOMAL PROTEIN L12"/>
    <property type="match status" value="1"/>
</dbReference>
<dbReference type="PANTHER" id="PTHR11661:SF1">
    <property type="entry name" value="LARGE RIBOSOMAL SUBUNIT PROTEIN UL11M"/>
    <property type="match status" value="1"/>
</dbReference>
<dbReference type="Pfam" id="PF00298">
    <property type="entry name" value="Ribosomal_L11"/>
    <property type="match status" value="1"/>
</dbReference>
<dbReference type="Pfam" id="PF03946">
    <property type="entry name" value="Ribosomal_L11_N"/>
    <property type="match status" value="1"/>
</dbReference>
<dbReference type="SMART" id="SM00649">
    <property type="entry name" value="RL11"/>
    <property type="match status" value="1"/>
</dbReference>
<dbReference type="SUPFAM" id="SSF54747">
    <property type="entry name" value="Ribosomal L11/L12e N-terminal domain"/>
    <property type="match status" value="1"/>
</dbReference>
<dbReference type="SUPFAM" id="SSF46906">
    <property type="entry name" value="Ribosomal protein L11, C-terminal domain"/>
    <property type="match status" value="1"/>
</dbReference>
<dbReference type="PROSITE" id="PS00359">
    <property type="entry name" value="RIBOSOMAL_L11"/>
    <property type="match status" value="1"/>
</dbReference>
<comment type="function">
    <text evidence="1">Forms part of the ribosomal stalk which helps the ribosome interact with GTP-bound translation factors.</text>
</comment>
<comment type="subunit">
    <text evidence="1">Part of the ribosomal stalk of the 50S ribosomal subunit. Interacts with L10 and the large rRNA to form the base of the stalk. L10 forms an elongated spine to which L12 dimers bind in a sequential fashion forming a multimeric L10(L12)X complex.</text>
</comment>
<comment type="PTM">
    <text evidence="1">One or more lysine residues are methylated.</text>
</comment>
<comment type="similarity">
    <text evidence="1">Belongs to the universal ribosomal protein uL11 family.</text>
</comment>
<feature type="chain" id="PRO_1000132853" description="Large ribosomal subunit protein uL11">
    <location>
        <begin position="1"/>
        <end position="142"/>
    </location>
</feature>
<name>RL11_ACIF5</name>
<sequence length="142" mass="14975">MAKKITGYIKLQVKAAQANPSPPIGPALGQRGLNIMEFCKAFNAQTQGVEPGLPLPVVITVFADKSFTFEVKTPPAAVLLMKAAGLPKGSGRPNTVKVGKVSEAQIEDIAKTKMPDLNTQDIESAKRSVRGTARSMGLTVEG</sequence>
<reference key="1">
    <citation type="submission" date="2008-08" db="EMBL/GenBank/DDBJ databases">
        <title>Complete sequence of Acidithiobacillus ferrooxidans ATCC 53993.</title>
        <authorList>
            <person name="Lucas S."/>
            <person name="Copeland A."/>
            <person name="Lapidus A."/>
            <person name="Glavina del Rio T."/>
            <person name="Dalin E."/>
            <person name="Tice H."/>
            <person name="Bruce D."/>
            <person name="Goodwin L."/>
            <person name="Pitluck S."/>
            <person name="Sims D."/>
            <person name="Brettin T."/>
            <person name="Detter J.C."/>
            <person name="Han C."/>
            <person name="Kuske C.R."/>
            <person name="Larimer F."/>
            <person name="Land M."/>
            <person name="Hauser L."/>
            <person name="Kyrpides N."/>
            <person name="Lykidis A."/>
            <person name="Borole A.P."/>
        </authorList>
    </citation>
    <scope>NUCLEOTIDE SEQUENCE [LARGE SCALE GENOMIC DNA]</scope>
    <source>
        <strain>ATCC 53993 / BNL-5-31</strain>
    </source>
</reference>
<gene>
    <name evidence="1" type="primary">rplK</name>
    <name type="ordered locus">Lferr_0486</name>
</gene>